<keyword id="KW-0067">ATP-binding</keyword>
<keyword id="KW-0963">Cytoplasm</keyword>
<keyword id="KW-0436">Ligase</keyword>
<keyword id="KW-0547">Nucleotide-binding</keyword>
<keyword id="KW-0819">tRNA processing</keyword>
<organism>
    <name type="scientific">Bartonella quintana (strain Toulouse)</name>
    <name type="common">Rochalimaea quintana</name>
    <dbReference type="NCBI Taxonomy" id="283165"/>
    <lineage>
        <taxon>Bacteria</taxon>
        <taxon>Pseudomonadati</taxon>
        <taxon>Pseudomonadota</taxon>
        <taxon>Alphaproteobacteria</taxon>
        <taxon>Hyphomicrobiales</taxon>
        <taxon>Bartonellaceae</taxon>
        <taxon>Bartonella</taxon>
    </lineage>
</organism>
<dbReference type="EC" id="6.3.4.19" evidence="1"/>
<dbReference type="EMBL" id="BX897700">
    <property type="protein sequence ID" value="CAF26635.1"/>
    <property type="molecule type" value="Genomic_DNA"/>
</dbReference>
<dbReference type="RefSeq" id="WP_011179810.1">
    <property type="nucleotide sequence ID" value="NC_005955.1"/>
</dbReference>
<dbReference type="SMR" id="Q6FYQ5"/>
<dbReference type="KEGG" id="bqu:BQ11760"/>
<dbReference type="eggNOG" id="COG0037">
    <property type="taxonomic scope" value="Bacteria"/>
</dbReference>
<dbReference type="HOGENOM" id="CLU_018869_3_3_5"/>
<dbReference type="OrthoDB" id="9807403at2"/>
<dbReference type="Proteomes" id="UP000000597">
    <property type="component" value="Chromosome"/>
</dbReference>
<dbReference type="GO" id="GO:0005737">
    <property type="term" value="C:cytoplasm"/>
    <property type="evidence" value="ECO:0007669"/>
    <property type="project" value="UniProtKB-SubCell"/>
</dbReference>
<dbReference type="GO" id="GO:0005524">
    <property type="term" value="F:ATP binding"/>
    <property type="evidence" value="ECO:0007669"/>
    <property type="project" value="UniProtKB-UniRule"/>
</dbReference>
<dbReference type="GO" id="GO:0032267">
    <property type="term" value="F:tRNA(Ile)-lysidine synthase activity"/>
    <property type="evidence" value="ECO:0007669"/>
    <property type="project" value="UniProtKB-EC"/>
</dbReference>
<dbReference type="GO" id="GO:0006400">
    <property type="term" value="P:tRNA modification"/>
    <property type="evidence" value="ECO:0007669"/>
    <property type="project" value="UniProtKB-UniRule"/>
</dbReference>
<dbReference type="CDD" id="cd01992">
    <property type="entry name" value="TilS_N"/>
    <property type="match status" value="1"/>
</dbReference>
<dbReference type="Gene3D" id="3.40.50.620">
    <property type="entry name" value="HUPs"/>
    <property type="match status" value="1"/>
</dbReference>
<dbReference type="HAMAP" id="MF_01161">
    <property type="entry name" value="tRNA_Ile_lys_synt"/>
    <property type="match status" value="1"/>
</dbReference>
<dbReference type="InterPro" id="IPR014729">
    <property type="entry name" value="Rossmann-like_a/b/a_fold"/>
</dbReference>
<dbReference type="InterPro" id="IPR011063">
    <property type="entry name" value="TilS/TtcA_N"/>
</dbReference>
<dbReference type="InterPro" id="IPR012094">
    <property type="entry name" value="tRNA_Ile_lys_synt"/>
</dbReference>
<dbReference type="InterPro" id="IPR012795">
    <property type="entry name" value="tRNA_Ile_lys_synt_N"/>
</dbReference>
<dbReference type="NCBIfam" id="TIGR02432">
    <property type="entry name" value="lysidine_TilS_N"/>
    <property type="match status" value="1"/>
</dbReference>
<dbReference type="PANTHER" id="PTHR43033">
    <property type="entry name" value="TRNA(ILE)-LYSIDINE SYNTHASE-RELATED"/>
    <property type="match status" value="1"/>
</dbReference>
<dbReference type="PANTHER" id="PTHR43033:SF1">
    <property type="entry name" value="TRNA(ILE)-LYSIDINE SYNTHASE-RELATED"/>
    <property type="match status" value="1"/>
</dbReference>
<dbReference type="Pfam" id="PF01171">
    <property type="entry name" value="ATP_bind_3"/>
    <property type="match status" value="1"/>
</dbReference>
<dbReference type="SUPFAM" id="SSF52402">
    <property type="entry name" value="Adenine nucleotide alpha hydrolases-like"/>
    <property type="match status" value="1"/>
</dbReference>
<name>TILS_BARQU</name>
<comment type="function">
    <text evidence="1">Ligates lysine onto the cytidine present at position 34 of the AUA codon-specific tRNA(Ile) that contains the anticodon CAU, in an ATP-dependent manner. Cytidine is converted to lysidine, thus changing the amino acid specificity of the tRNA from methionine to isoleucine.</text>
</comment>
<comment type="catalytic activity">
    <reaction evidence="1">
        <text>cytidine(34) in tRNA(Ile2) + L-lysine + ATP = lysidine(34) in tRNA(Ile2) + AMP + diphosphate + H(+)</text>
        <dbReference type="Rhea" id="RHEA:43744"/>
        <dbReference type="Rhea" id="RHEA-COMP:10625"/>
        <dbReference type="Rhea" id="RHEA-COMP:10670"/>
        <dbReference type="ChEBI" id="CHEBI:15378"/>
        <dbReference type="ChEBI" id="CHEBI:30616"/>
        <dbReference type="ChEBI" id="CHEBI:32551"/>
        <dbReference type="ChEBI" id="CHEBI:33019"/>
        <dbReference type="ChEBI" id="CHEBI:82748"/>
        <dbReference type="ChEBI" id="CHEBI:83665"/>
        <dbReference type="ChEBI" id="CHEBI:456215"/>
        <dbReference type="EC" id="6.3.4.19"/>
    </reaction>
</comment>
<comment type="subcellular location">
    <subcellularLocation>
        <location evidence="1">Cytoplasm</location>
    </subcellularLocation>
</comment>
<comment type="domain">
    <text>The N-terminal region contains the highly conserved SGGXDS motif, predicted to be a P-loop motif involved in ATP binding.</text>
</comment>
<comment type="similarity">
    <text evidence="1">Belongs to the tRNA(Ile)-lysidine synthase family.</text>
</comment>
<gene>
    <name evidence="1" type="primary">tilS</name>
    <name type="ordered locus">BQ11760</name>
</gene>
<sequence length="476" mass="54032">MCVKLAGNLFKTSDFIQCRKVILAVSGGSDSLALLFLVKDHLKTFSIPTEIIVVTVDHQLRRESACEAESVAEICRAHHIQHVIVRWEGKKPKTHIISSARTVRYNLLFKEAQKQGATLIMTGHTLNDQVETYQMRCQRLQKSADVLQREAFEDMRDGVCSTETRANIAEKSYGLMYERGLSCIPREALLNQTVRLIRPLLGVKRKTLRAYLRLKGKTWIDDPTNENPNFERVRVRQSLHPKKFAGIAQKVHEATLQRRKQAQNVANLILALDVSVEHGRCFIAKPVSFLQQHSGFPFVVGLFAVLMGGGFYLLPTKKLNTLVSKLCLHSLEKRRFTLAGSVIESNRSGLAFWRESRNIKEGAVEPGKTFLWDGRYQITNRGDETIKVGAAGLQQLKSLFKNNNFDLENAHFPSLQSLLMISNDKGYDIPELTNHTTSQQSIIIKRIMAPFDWLLSCEDVPFVNVLEPFFDIKVER</sequence>
<reference key="1">
    <citation type="journal article" date="2004" name="Proc. Natl. Acad. Sci. U.S.A.">
        <title>The louse-borne human pathogen Bartonella quintana is a genomic derivative of the zoonotic agent Bartonella henselae.</title>
        <authorList>
            <person name="Alsmark U.C.M."/>
            <person name="Frank A.C."/>
            <person name="Karlberg E.O."/>
            <person name="Legault B.-A."/>
            <person name="Ardell D.H."/>
            <person name="Canbaeck B."/>
            <person name="Eriksson A.-S."/>
            <person name="Naeslund A.K."/>
            <person name="Handley S.A."/>
            <person name="Huvet M."/>
            <person name="La Scola B."/>
            <person name="Holmberg M."/>
            <person name="Andersson S.G.E."/>
        </authorList>
    </citation>
    <scope>NUCLEOTIDE SEQUENCE [LARGE SCALE GENOMIC DNA]</scope>
    <source>
        <strain>Toulouse</strain>
    </source>
</reference>
<feature type="chain" id="PRO_0000181653" description="tRNA(Ile)-lysidine synthase">
    <location>
        <begin position="1"/>
        <end position="476"/>
    </location>
</feature>
<feature type="binding site" evidence="1">
    <location>
        <begin position="26"/>
        <end position="31"/>
    </location>
    <ligand>
        <name>ATP</name>
        <dbReference type="ChEBI" id="CHEBI:30616"/>
    </ligand>
</feature>
<protein>
    <recommendedName>
        <fullName evidence="1">tRNA(Ile)-lysidine synthase</fullName>
        <ecNumber evidence="1">6.3.4.19</ecNumber>
    </recommendedName>
    <alternativeName>
        <fullName evidence="1">tRNA(Ile)-2-lysyl-cytidine synthase</fullName>
    </alternativeName>
    <alternativeName>
        <fullName evidence="1">tRNA(Ile)-lysidine synthetase</fullName>
    </alternativeName>
</protein>
<proteinExistence type="inferred from homology"/>
<evidence type="ECO:0000255" key="1">
    <source>
        <dbReference type="HAMAP-Rule" id="MF_01161"/>
    </source>
</evidence>
<accession>Q6FYQ5</accession>